<protein>
    <recommendedName>
        <fullName evidence="1">Probable manganese-dependent inorganic pyrophosphatase</fullName>
        <ecNumber evidence="1">3.6.1.1</ecNumber>
    </recommendedName>
    <alternativeName>
        <fullName evidence="1">Pyrophosphate phospho-hydrolase</fullName>
        <shortName evidence="1">PPase</shortName>
    </alternativeName>
</protein>
<comment type="catalytic activity">
    <reaction evidence="1">
        <text>diphosphate + H2O = 2 phosphate + H(+)</text>
        <dbReference type="Rhea" id="RHEA:24576"/>
        <dbReference type="ChEBI" id="CHEBI:15377"/>
        <dbReference type="ChEBI" id="CHEBI:15378"/>
        <dbReference type="ChEBI" id="CHEBI:33019"/>
        <dbReference type="ChEBI" id="CHEBI:43474"/>
        <dbReference type="EC" id="3.6.1.1"/>
    </reaction>
</comment>
<comment type="cofactor">
    <cofactor evidence="1">
        <name>Mn(2+)</name>
        <dbReference type="ChEBI" id="CHEBI:29035"/>
    </cofactor>
    <text evidence="1">Binds 2 manganese ions per subunit.</text>
</comment>
<comment type="subcellular location">
    <subcellularLocation>
        <location evidence="1">Cytoplasm</location>
    </subcellularLocation>
</comment>
<comment type="similarity">
    <text evidence="1">Belongs to the PPase class C family.</text>
</comment>
<keyword id="KW-0963">Cytoplasm</keyword>
<keyword id="KW-0378">Hydrolase</keyword>
<keyword id="KW-0464">Manganese</keyword>
<keyword id="KW-0479">Metal-binding</keyword>
<gene>
    <name evidence="1" type="primary">ppaC</name>
    <name type="ordered locus">STER_0419</name>
</gene>
<reference key="1">
    <citation type="journal article" date="2006" name="Proc. Natl. Acad. Sci. U.S.A.">
        <title>Comparative genomics of the lactic acid bacteria.</title>
        <authorList>
            <person name="Makarova K.S."/>
            <person name="Slesarev A."/>
            <person name="Wolf Y.I."/>
            <person name="Sorokin A."/>
            <person name="Mirkin B."/>
            <person name="Koonin E.V."/>
            <person name="Pavlov A."/>
            <person name="Pavlova N."/>
            <person name="Karamychev V."/>
            <person name="Polouchine N."/>
            <person name="Shakhova V."/>
            <person name="Grigoriev I."/>
            <person name="Lou Y."/>
            <person name="Rohksar D."/>
            <person name="Lucas S."/>
            <person name="Huang K."/>
            <person name="Goodstein D.M."/>
            <person name="Hawkins T."/>
            <person name="Plengvidhya V."/>
            <person name="Welker D."/>
            <person name="Hughes J."/>
            <person name="Goh Y."/>
            <person name="Benson A."/>
            <person name="Baldwin K."/>
            <person name="Lee J.-H."/>
            <person name="Diaz-Muniz I."/>
            <person name="Dosti B."/>
            <person name="Smeianov V."/>
            <person name="Wechter W."/>
            <person name="Barabote R."/>
            <person name="Lorca G."/>
            <person name="Altermann E."/>
            <person name="Barrangou R."/>
            <person name="Ganesan B."/>
            <person name="Xie Y."/>
            <person name="Rawsthorne H."/>
            <person name="Tamir D."/>
            <person name="Parker C."/>
            <person name="Breidt F."/>
            <person name="Broadbent J.R."/>
            <person name="Hutkins R."/>
            <person name="O'Sullivan D."/>
            <person name="Steele J."/>
            <person name="Unlu G."/>
            <person name="Saier M.H. Jr."/>
            <person name="Klaenhammer T."/>
            <person name="Richardson P."/>
            <person name="Kozyavkin S."/>
            <person name="Weimer B.C."/>
            <person name="Mills D.A."/>
        </authorList>
    </citation>
    <scope>NUCLEOTIDE SEQUENCE [LARGE SCALE GENOMIC DNA]</scope>
    <source>
        <strain>ATCC BAA-491 / LMD-9</strain>
    </source>
</reference>
<proteinExistence type="inferred from homology"/>
<organism>
    <name type="scientific">Streptococcus thermophilus (strain ATCC BAA-491 / LMD-9)</name>
    <dbReference type="NCBI Taxonomy" id="322159"/>
    <lineage>
        <taxon>Bacteria</taxon>
        <taxon>Bacillati</taxon>
        <taxon>Bacillota</taxon>
        <taxon>Bacilli</taxon>
        <taxon>Lactobacillales</taxon>
        <taxon>Streptococcaceae</taxon>
        <taxon>Streptococcus</taxon>
    </lineage>
</organism>
<evidence type="ECO:0000255" key="1">
    <source>
        <dbReference type="HAMAP-Rule" id="MF_00207"/>
    </source>
</evidence>
<name>PPAC_STRTD</name>
<dbReference type="EC" id="3.6.1.1" evidence="1"/>
<dbReference type="EMBL" id="CP000419">
    <property type="protein sequence ID" value="ABJ65707.1"/>
    <property type="molecule type" value="Genomic_DNA"/>
</dbReference>
<dbReference type="RefSeq" id="WP_011680773.1">
    <property type="nucleotide sequence ID" value="NC_008532.1"/>
</dbReference>
<dbReference type="SMR" id="Q03M65"/>
<dbReference type="KEGG" id="ste:STER_0419"/>
<dbReference type="HOGENOM" id="CLU_025243_0_1_9"/>
<dbReference type="GO" id="GO:0005737">
    <property type="term" value="C:cytoplasm"/>
    <property type="evidence" value="ECO:0007669"/>
    <property type="project" value="UniProtKB-SubCell"/>
</dbReference>
<dbReference type="GO" id="GO:0004427">
    <property type="term" value="F:inorganic diphosphate phosphatase activity"/>
    <property type="evidence" value="ECO:0007669"/>
    <property type="project" value="UniProtKB-UniRule"/>
</dbReference>
<dbReference type="GO" id="GO:0030145">
    <property type="term" value="F:manganese ion binding"/>
    <property type="evidence" value="ECO:0007669"/>
    <property type="project" value="UniProtKB-UniRule"/>
</dbReference>
<dbReference type="FunFam" id="3.10.310.20:FF:000001">
    <property type="entry name" value="Probable manganese-dependent inorganic pyrophosphatase"/>
    <property type="match status" value="1"/>
</dbReference>
<dbReference type="FunFam" id="3.90.1640.10:FF:000001">
    <property type="entry name" value="Probable manganese-dependent inorganic pyrophosphatase"/>
    <property type="match status" value="1"/>
</dbReference>
<dbReference type="Gene3D" id="3.10.310.20">
    <property type="entry name" value="DHHA2 domain"/>
    <property type="match status" value="1"/>
</dbReference>
<dbReference type="Gene3D" id="3.90.1640.10">
    <property type="entry name" value="inorganic pyrophosphatase (n-terminal core)"/>
    <property type="match status" value="1"/>
</dbReference>
<dbReference type="HAMAP" id="MF_00207">
    <property type="entry name" value="PPase_C"/>
    <property type="match status" value="1"/>
</dbReference>
<dbReference type="InterPro" id="IPR001667">
    <property type="entry name" value="DDH_dom"/>
</dbReference>
<dbReference type="InterPro" id="IPR038763">
    <property type="entry name" value="DHH_sf"/>
</dbReference>
<dbReference type="InterPro" id="IPR004097">
    <property type="entry name" value="DHHA2"/>
</dbReference>
<dbReference type="InterPro" id="IPR038222">
    <property type="entry name" value="DHHA2_dom_sf"/>
</dbReference>
<dbReference type="InterPro" id="IPR022934">
    <property type="entry name" value="Mn-dep_inorganic_PyrPase"/>
</dbReference>
<dbReference type="InterPro" id="IPR051319">
    <property type="entry name" value="Oligoribo/pAp-PDE_c-di-AMP_PDE"/>
</dbReference>
<dbReference type="NCBIfam" id="NF003877">
    <property type="entry name" value="PRK05427.1"/>
    <property type="match status" value="1"/>
</dbReference>
<dbReference type="PANTHER" id="PTHR47618">
    <property type="entry name" value="BIFUNCTIONAL OLIGORIBONUCLEASE AND PAP PHOSPHATASE NRNA"/>
    <property type="match status" value="1"/>
</dbReference>
<dbReference type="PANTHER" id="PTHR47618:SF1">
    <property type="entry name" value="BIFUNCTIONAL OLIGORIBONUCLEASE AND PAP PHOSPHATASE NRNA"/>
    <property type="match status" value="1"/>
</dbReference>
<dbReference type="Pfam" id="PF01368">
    <property type="entry name" value="DHH"/>
    <property type="match status" value="1"/>
</dbReference>
<dbReference type="Pfam" id="PF02833">
    <property type="entry name" value="DHHA2"/>
    <property type="match status" value="1"/>
</dbReference>
<dbReference type="SMART" id="SM01131">
    <property type="entry name" value="DHHA2"/>
    <property type="match status" value="1"/>
</dbReference>
<dbReference type="SUPFAM" id="SSF64182">
    <property type="entry name" value="DHH phosphoesterases"/>
    <property type="match status" value="1"/>
</dbReference>
<sequence length="310" mass="33838">MSKIFVFGHQNPDSDAIGSSYGYAYLKRQLGVEAEAVALGTPNEETAFVLDYFSVNAPRVVESARSEGVNQVILTDHNEFQQSISDIKDVEVIEVVDHHRVANFETANPLMMRLEPVGSASSIVYRMFKENNVEIPKDVAGLLLSGLISDTLLLKSPTTHASDPAVAEELARLAGVNLEEYGLAMLKAGTNLSSKSAEELIDIDAKTFELNGNQVRVAQVNTVDISDVLSRQAEIEEAINSSIKSNGYSDFVLMITDILNSNSEILALGSNTDKIEKAFNFVLENNHAFLKGAVSRKKQVVPQLTESFNV</sequence>
<feature type="chain" id="PRO_1000012332" description="Probable manganese-dependent inorganic pyrophosphatase">
    <location>
        <begin position="1"/>
        <end position="310"/>
    </location>
</feature>
<feature type="binding site" evidence="1">
    <location>
        <position position="9"/>
    </location>
    <ligand>
        <name>Mn(2+)</name>
        <dbReference type="ChEBI" id="CHEBI:29035"/>
        <label>1</label>
    </ligand>
</feature>
<feature type="binding site" evidence="1">
    <location>
        <position position="13"/>
    </location>
    <ligand>
        <name>Mn(2+)</name>
        <dbReference type="ChEBI" id="CHEBI:29035"/>
        <label>1</label>
    </ligand>
</feature>
<feature type="binding site" evidence="1">
    <location>
        <position position="15"/>
    </location>
    <ligand>
        <name>Mn(2+)</name>
        <dbReference type="ChEBI" id="CHEBI:29035"/>
        <label>2</label>
    </ligand>
</feature>
<feature type="binding site" evidence="1">
    <location>
        <position position="76"/>
    </location>
    <ligand>
        <name>Mn(2+)</name>
        <dbReference type="ChEBI" id="CHEBI:29035"/>
        <label>1</label>
    </ligand>
</feature>
<feature type="binding site" evidence="1">
    <location>
        <position position="76"/>
    </location>
    <ligand>
        <name>Mn(2+)</name>
        <dbReference type="ChEBI" id="CHEBI:29035"/>
        <label>2</label>
    </ligand>
</feature>
<feature type="binding site" evidence="1">
    <location>
        <position position="98"/>
    </location>
    <ligand>
        <name>Mn(2+)</name>
        <dbReference type="ChEBI" id="CHEBI:29035"/>
        <label>2</label>
    </ligand>
</feature>
<feature type="binding site" evidence="1">
    <location>
        <position position="150"/>
    </location>
    <ligand>
        <name>Mn(2+)</name>
        <dbReference type="ChEBI" id="CHEBI:29035"/>
        <label>2</label>
    </ligand>
</feature>
<accession>Q03M65</accession>